<comment type="function">
    <text evidence="1">Involved in the biosynthesis of the chorismate, which leads to the biosynthesis of aromatic amino acids. Catalyzes the reversible NADPH linked reduction of 3-dehydroshikimate (DHSA) to yield shikimate (SA).</text>
</comment>
<comment type="catalytic activity">
    <reaction evidence="1">
        <text>shikimate + NADP(+) = 3-dehydroshikimate + NADPH + H(+)</text>
        <dbReference type="Rhea" id="RHEA:17737"/>
        <dbReference type="ChEBI" id="CHEBI:15378"/>
        <dbReference type="ChEBI" id="CHEBI:16630"/>
        <dbReference type="ChEBI" id="CHEBI:36208"/>
        <dbReference type="ChEBI" id="CHEBI:57783"/>
        <dbReference type="ChEBI" id="CHEBI:58349"/>
        <dbReference type="EC" id="1.1.1.25"/>
    </reaction>
</comment>
<comment type="pathway">
    <text evidence="1">Metabolic intermediate biosynthesis; chorismate biosynthesis; chorismate from D-erythrose 4-phosphate and phosphoenolpyruvate: step 4/7.</text>
</comment>
<comment type="subunit">
    <text evidence="1">Homodimer.</text>
</comment>
<comment type="similarity">
    <text evidence="1">Belongs to the shikimate dehydrogenase family.</text>
</comment>
<accession>C1CQX9</accession>
<evidence type="ECO:0000255" key="1">
    <source>
        <dbReference type="HAMAP-Rule" id="MF_00222"/>
    </source>
</evidence>
<protein>
    <recommendedName>
        <fullName evidence="1">Shikimate dehydrogenase (NADP(+))</fullName>
        <shortName evidence="1">SDH</shortName>
        <ecNumber evidence="1">1.1.1.25</ecNumber>
    </recommendedName>
</protein>
<keyword id="KW-0028">Amino-acid biosynthesis</keyword>
<keyword id="KW-0057">Aromatic amino acid biosynthesis</keyword>
<keyword id="KW-0521">NADP</keyword>
<keyword id="KW-0560">Oxidoreductase</keyword>
<proteinExistence type="inferred from homology"/>
<feature type="chain" id="PRO_1000124900" description="Shikimate dehydrogenase (NADP(+))">
    <location>
        <begin position="1"/>
        <end position="284"/>
    </location>
</feature>
<feature type="active site" description="Proton acceptor" evidence="1">
    <location>
        <position position="71"/>
    </location>
</feature>
<feature type="binding site" evidence="1">
    <location>
        <begin position="20"/>
        <end position="22"/>
    </location>
    <ligand>
        <name>shikimate</name>
        <dbReference type="ChEBI" id="CHEBI:36208"/>
    </ligand>
</feature>
<feature type="binding site" evidence="1">
    <location>
        <position position="67"/>
    </location>
    <ligand>
        <name>shikimate</name>
        <dbReference type="ChEBI" id="CHEBI:36208"/>
    </ligand>
</feature>
<feature type="binding site" evidence="1">
    <location>
        <position position="83"/>
    </location>
    <ligand>
        <name>NADP(+)</name>
        <dbReference type="ChEBI" id="CHEBI:58349"/>
    </ligand>
</feature>
<feature type="binding site" evidence="1">
    <location>
        <position position="92"/>
    </location>
    <ligand>
        <name>shikimate</name>
        <dbReference type="ChEBI" id="CHEBI:36208"/>
    </ligand>
</feature>
<feature type="binding site" evidence="1">
    <location>
        <position position="107"/>
    </location>
    <ligand>
        <name>shikimate</name>
        <dbReference type="ChEBI" id="CHEBI:36208"/>
    </ligand>
</feature>
<feature type="binding site" evidence="1">
    <location>
        <begin position="129"/>
        <end position="133"/>
    </location>
    <ligand>
        <name>NADP(+)</name>
        <dbReference type="ChEBI" id="CHEBI:58349"/>
    </ligand>
</feature>
<feature type="binding site" evidence="1">
    <location>
        <position position="227"/>
    </location>
    <ligand>
        <name>NADP(+)</name>
        <dbReference type="ChEBI" id="CHEBI:58349"/>
    </ligand>
</feature>
<feature type="binding site" evidence="1">
    <location>
        <position position="229"/>
    </location>
    <ligand>
        <name>shikimate</name>
        <dbReference type="ChEBI" id="CHEBI:36208"/>
    </ligand>
</feature>
<feature type="binding site" evidence="1">
    <location>
        <position position="250"/>
    </location>
    <ligand>
        <name>NADP(+)</name>
        <dbReference type="ChEBI" id="CHEBI:58349"/>
    </ligand>
</feature>
<reference key="1">
    <citation type="journal article" date="2010" name="Genome Biol.">
        <title>Structure and dynamics of the pan-genome of Streptococcus pneumoniae and closely related species.</title>
        <authorList>
            <person name="Donati C."/>
            <person name="Hiller N.L."/>
            <person name="Tettelin H."/>
            <person name="Muzzi A."/>
            <person name="Croucher N.J."/>
            <person name="Angiuoli S.V."/>
            <person name="Oggioni M."/>
            <person name="Dunning Hotopp J.C."/>
            <person name="Hu F.Z."/>
            <person name="Riley D.R."/>
            <person name="Covacci A."/>
            <person name="Mitchell T.J."/>
            <person name="Bentley S.D."/>
            <person name="Kilian M."/>
            <person name="Ehrlich G.D."/>
            <person name="Rappuoli R."/>
            <person name="Moxon E.R."/>
            <person name="Masignani V."/>
        </authorList>
    </citation>
    <scope>NUCLEOTIDE SEQUENCE [LARGE SCALE GENOMIC DNA]</scope>
    <source>
        <strain>Taiwan19F-14</strain>
    </source>
</reference>
<dbReference type="EC" id="1.1.1.25" evidence="1"/>
<dbReference type="EMBL" id="CP000921">
    <property type="protein sequence ID" value="ACO22830.1"/>
    <property type="molecule type" value="Genomic_DNA"/>
</dbReference>
<dbReference type="RefSeq" id="WP_000762514.1">
    <property type="nucleotide sequence ID" value="NC_012469.1"/>
</dbReference>
<dbReference type="SMR" id="C1CQX9"/>
<dbReference type="KEGG" id="snt:SPT_0897"/>
<dbReference type="HOGENOM" id="CLU_044063_4_4_9"/>
<dbReference type="UniPathway" id="UPA00053">
    <property type="reaction ID" value="UER00087"/>
</dbReference>
<dbReference type="GO" id="GO:0050661">
    <property type="term" value="F:NADP binding"/>
    <property type="evidence" value="ECO:0007669"/>
    <property type="project" value="InterPro"/>
</dbReference>
<dbReference type="GO" id="GO:0004764">
    <property type="term" value="F:shikimate 3-dehydrogenase (NADP+) activity"/>
    <property type="evidence" value="ECO:0007669"/>
    <property type="project" value="UniProtKB-UniRule"/>
</dbReference>
<dbReference type="GO" id="GO:0008652">
    <property type="term" value="P:amino acid biosynthetic process"/>
    <property type="evidence" value="ECO:0007669"/>
    <property type="project" value="UniProtKB-KW"/>
</dbReference>
<dbReference type="GO" id="GO:0009073">
    <property type="term" value="P:aromatic amino acid family biosynthetic process"/>
    <property type="evidence" value="ECO:0007669"/>
    <property type="project" value="UniProtKB-KW"/>
</dbReference>
<dbReference type="GO" id="GO:0009423">
    <property type="term" value="P:chorismate biosynthetic process"/>
    <property type="evidence" value="ECO:0007669"/>
    <property type="project" value="UniProtKB-UniRule"/>
</dbReference>
<dbReference type="GO" id="GO:0019632">
    <property type="term" value="P:shikimate metabolic process"/>
    <property type="evidence" value="ECO:0007669"/>
    <property type="project" value="InterPro"/>
</dbReference>
<dbReference type="CDD" id="cd01065">
    <property type="entry name" value="NAD_bind_Shikimate_DH"/>
    <property type="match status" value="1"/>
</dbReference>
<dbReference type="FunFam" id="3.40.50.10860:FF:000004">
    <property type="entry name" value="Quinate/shikimate dehydrogenase"/>
    <property type="match status" value="1"/>
</dbReference>
<dbReference type="FunFam" id="3.40.50.720:FF:000505">
    <property type="entry name" value="Shikimate dehydrogenase (NADP(+))"/>
    <property type="match status" value="1"/>
</dbReference>
<dbReference type="Gene3D" id="3.40.50.10860">
    <property type="entry name" value="Leucine Dehydrogenase, chain A, domain 1"/>
    <property type="match status" value="1"/>
</dbReference>
<dbReference type="Gene3D" id="3.40.50.720">
    <property type="entry name" value="NAD(P)-binding Rossmann-like Domain"/>
    <property type="match status" value="1"/>
</dbReference>
<dbReference type="HAMAP" id="MF_00222">
    <property type="entry name" value="Shikimate_DH_AroE"/>
    <property type="match status" value="1"/>
</dbReference>
<dbReference type="InterPro" id="IPR046346">
    <property type="entry name" value="Aminoacid_DH-like_N_sf"/>
</dbReference>
<dbReference type="InterPro" id="IPR036291">
    <property type="entry name" value="NAD(P)-bd_dom_sf"/>
</dbReference>
<dbReference type="InterPro" id="IPR041121">
    <property type="entry name" value="SDH_C"/>
</dbReference>
<dbReference type="InterPro" id="IPR011342">
    <property type="entry name" value="Shikimate_DH"/>
</dbReference>
<dbReference type="InterPro" id="IPR013708">
    <property type="entry name" value="Shikimate_DH-bd_N"/>
</dbReference>
<dbReference type="InterPro" id="IPR022893">
    <property type="entry name" value="Shikimate_DH_fam"/>
</dbReference>
<dbReference type="NCBIfam" id="TIGR00507">
    <property type="entry name" value="aroE"/>
    <property type="match status" value="1"/>
</dbReference>
<dbReference type="NCBIfam" id="NF001315">
    <property type="entry name" value="PRK00258.2-4"/>
    <property type="match status" value="1"/>
</dbReference>
<dbReference type="PANTHER" id="PTHR21089:SF1">
    <property type="entry name" value="BIFUNCTIONAL 3-DEHYDROQUINATE DEHYDRATASE_SHIKIMATE DEHYDROGENASE, CHLOROPLASTIC"/>
    <property type="match status" value="1"/>
</dbReference>
<dbReference type="PANTHER" id="PTHR21089">
    <property type="entry name" value="SHIKIMATE DEHYDROGENASE"/>
    <property type="match status" value="1"/>
</dbReference>
<dbReference type="Pfam" id="PF18317">
    <property type="entry name" value="SDH_C"/>
    <property type="match status" value="1"/>
</dbReference>
<dbReference type="Pfam" id="PF08501">
    <property type="entry name" value="Shikimate_dh_N"/>
    <property type="match status" value="1"/>
</dbReference>
<dbReference type="SUPFAM" id="SSF53223">
    <property type="entry name" value="Aminoacid dehydrogenase-like, N-terminal domain"/>
    <property type="match status" value="1"/>
</dbReference>
<dbReference type="SUPFAM" id="SSF51735">
    <property type="entry name" value="NAD(P)-binding Rossmann-fold domains"/>
    <property type="match status" value="1"/>
</dbReference>
<gene>
    <name evidence="1" type="primary">aroE</name>
    <name type="ordered locus">SPT_0897</name>
</gene>
<organism>
    <name type="scientific">Streptococcus pneumoniae (strain Taiwan19F-14)</name>
    <dbReference type="NCBI Taxonomy" id="487213"/>
    <lineage>
        <taxon>Bacteria</taxon>
        <taxon>Bacillati</taxon>
        <taxon>Bacillota</taxon>
        <taxon>Bacilli</taxon>
        <taxon>Lactobacillales</taxon>
        <taxon>Streptococcaceae</taxon>
        <taxon>Streptococcus</taxon>
    </lineage>
</organism>
<name>AROE_STRZT</name>
<sequence length="284" mass="31272">MKLDGYTRLTAVVANPIKHSISPFIHNRAFEATATNGAYVAWEIEASDLAETVANIRRYQMFGINLSMPYKEQVIPYLDKLSDEARLIGAVNTVVNENGNLIGYNTDGKGFFKCLPSFTISGKKMTLLGAGGAAKSILAQAILDGVSQISVFVRSVSMEKTRPYLDKLQEQTGFKVDLCALEYVSELQARIAESDLLVNATSVGMDGQSSPVPENIVLPETLLVADIIYQPFETPFLKWARSQGNPAVNGLGMLLYQAAEAFQLWTGKEMPTEEIWQSLTEKYQ</sequence>